<evidence type="ECO:0000250" key="1"/>
<evidence type="ECO:0000255" key="2"/>
<evidence type="ECO:0000305" key="3"/>
<feature type="signal peptide" evidence="2">
    <location>
        <begin position="1"/>
        <end position="14"/>
    </location>
</feature>
<feature type="chain" id="PRO_0000408601" description="Long chronological lifespan protein 2">
    <location>
        <begin position="15"/>
        <end position="119"/>
    </location>
</feature>
<protein>
    <recommendedName>
        <fullName>Long chronological lifespan protein 2</fullName>
    </recommendedName>
</protein>
<gene>
    <name type="primary">LCL2</name>
    <name type="ordered locus">CAGL0M11572g</name>
</gene>
<organism>
    <name type="scientific">Candida glabrata (strain ATCC 2001 / BCRC 20586 / JCM 3761 / NBRC 0622 / NRRL Y-65 / CBS 138)</name>
    <name type="common">Yeast</name>
    <name type="synonym">Nakaseomyces glabratus</name>
    <dbReference type="NCBI Taxonomy" id="284593"/>
    <lineage>
        <taxon>Eukaryota</taxon>
        <taxon>Fungi</taxon>
        <taxon>Dikarya</taxon>
        <taxon>Ascomycota</taxon>
        <taxon>Saccharomycotina</taxon>
        <taxon>Saccharomycetes</taxon>
        <taxon>Saccharomycetales</taxon>
        <taxon>Saccharomycetaceae</taxon>
        <taxon>Nakaseomyces</taxon>
    </lineage>
</organism>
<comment type="function">
    <text evidence="1">Probable component of the endoplasmic reticulum-associated degradation (ERAD) pathway.</text>
</comment>
<comment type="similarity">
    <text evidence="3">Belongs to the LCL2 family.</text>
</comment>
<reference key="1">
    <citation type="journal article" date="2004" name="Nature">
        <title>Genome evolution in yeasts.</title>
        <authorList>
            <person name="Dujon B."/>
            <person name="Sherman D."/>
            <person name="Fischer G."/>
            <person name="Durrens P."/>
            <person name="Casaregola S."/>
            <person name="Lafontaine I."/>
            <person name="de Montigny J."/>
            <person name="Marck C."/>
            <person name="Neuveglise C."/>
            <person name="Talla E."/>
            <person name="Goffard N."/>
            <person name="Frangeul L."/>
            <person name="Aigle M."/>
            <person name="Anthouard V."/>
            <person name="Babour A."/>
            <person name="Barbe V."/>
            <person name="Barnay S."/>
            <person name="Blanchin S."/>
            <person name="Beckerich J.-M."/>
            <person name="Beyne E."/>
            <person name="Bleykasten C."/>
            <person name="Boisrame A."/>
            <person name="Boyer J."/>
            <person name="Cattolico L."/>
            <person name="Confanioleri F."/>
            <person name="de Daruvar A."/>
            <person name="Despons L."/>
            <person name="Fabre E."/>
            <person name="Fairhead C."/>
            <person name="Ferry-Dumazet H."/>
            <person name="Groppi A."/>
            <person name="Hantraye F."/>
            <person name="Hennequin C."/>
            <person name="Jauniaux N."/>
            <person name="Joyet P."/>
            <person name="Kachouri R."/>
            <person name="Kerrest A."/>
            <person name="Koszul R."/>
            <person name="Lemaire M."/>
            <person name="Lesur I."/>
            <person name="Ma L."/>
            <person name="Muller H."/>
            <person name="Nicaud J.-M."/>
            <person name="Nikolski M."/>
            <person name="Oztas S."/>
            <person name="Ozier-Kalogeropoulos O."/>
            <person name="Pellenz S."/>
            <person name="Potier S."/>
            <person name="Richard G.-F."/>
            <person name="Straub M.-L."/>
            <person name="Suleau A."/>
            <person name="Swennen D."/>
            <person name="Tekaia F."/>
            <person name="Wesolowski-Louvel M."/>
            <person name="Westhof E."/>
            <person name="Wirth B."/>
            <person name="Zeniou-Meyer M."/>
            <person name="Zivanovic Y."/>
            <person name="Bolotin-Fukuhara M."/>
            <person name="Thierry A."/>
            <person name="Bouchier C."/>
            <person name="Caudron B."/>
            <person name="Scarpelli C."/>
            <person name="Gaillardin C."/>
            <person name="Weissenbach J."/>
            <person name="Wincker P."/>
            <person name="Souciet J.-L."/>
        </authorList>
    </citation>
    <scope>NUCLEOTIDE SEQUENCE [LARGE SCALE GENOMIC DNA]</scope>
    <source>
        <strain>ATCC 2001 / BCRC 20586 / JCM 3761 / NBRC 0622 / NRRL Y-65 / CBS 138</strain>
    </source>
</reference>
<sequence length="119" mass="13477">MNLLMVLFVAQAHAFFFGQQQQQQQQQASYEDRVLDSGCAKYLCSDTLECVDSWKDCPCPFPKSQLKCMLPKGSNRPYVCISKPATHDEKLNLIYDDPVQGPKAAIKGMRDCGWVQQNL</sequence>
<accession>Q6FIV0</accession>
<keyword id="KW-1185">Reference proteome</keyword>
<keyword id="KW-0732">Signal</keyword>
<proteinExistence type="inferred from homology"/>
<dbReference type="EMBL" id="CR380959">
    <property type="protein sequence ID" value="CAG62824.1"/>
    <property type="molecule type" value="Genomic_DNA"/>
</dbReference>
<dbReference type="RefSeq" id="XP_449844.1">
    <property type="nucleotide sequence ID" value="XM_449844.1"/>
</dbReference>
<dbReference type="FunCoup" id="Q6FIV0">
    <property type="interactions" value="26"/>
</dbReference>
<dbReference type="STRING" id="284593.Q6FIV0"/>
<dbReference type="EnsemblFungi" id="CAGL0M11572g-T">
    <property type="protein sequence ID" value="CAGL0M11572g-T-p1"/>
    <property type="gene ID" value="CAGL0M11572g"/>
</dbReference>
<dbReference type="KEGG" id="cgr:2891238"/>
<dbReference type="CGD" id="CAL0137141">
    <property type="gene designation" value="CAGL0M11572g"/>
</dbReference>
<dbReference type="VEuPathDB" id="FungiDB:B1J91_M11572g"/>
<dbReference type="VEuPathDB" id="FungiDB:CAGL0M11572g"/>
<dbReference type="eggNOG" id="ENOG502S416">
    <property type="taxonomic scope" value="Eukaryota"/>
</dbReference>
<dbReference type="HOGENOM" id="CLU_142363_1_0_1"/>
<dbReference type="InParanoid" id="Q6FIV0"/>
<dbReference type="OMA" id="KPATHDE"/>
<dbReference type="Proteomes" id="UP000002428">
    <property type="component" value="Chromosome M"/>
</dbReference>
<dbReference type="GO" id="GO:0036503">
    <property type="term" value="P:ERAD pathway"/>
    <property type="evidence" value="ECO:0007669"/>
    <property type="project" value="TreeGrafter"/>
</dbReference>
<dbReference type="CDD" id="cd23996">
    <property type="entry name" value="LCL2-like"/>
    <property type="match status" value="1"/>
</dbReference>
<dbReference type="InterPro" id="IPR034543">
    <property type="entry name" value="LCL2"/>
</dbReference>
<dbReference type="PANTHER" id="PTHR38425">
    <property type="entry name" value="LONG CHRONOLOGICAL LIFESPAN PROTEIN 2"/>
    <property type="match status" value="1"/>
</dbReference>
<dbReference type="PANTHER" id="PTHR38425:SF1">
    <property type="entry name" value="LONG CHRONOLOGICAL LIFESPAN PROTEIN 2"/>
    <property type="match status" value="1"/>
</dbReference>
<name>LCL2_CANGA</name>